<gene>
    <name type="primary">KIN82</name>
    <name type="synonym">FPK2</name>
    <name type="ordered locus">YCR091W</name>
    <name type="ORF">YCR1153</name>
    <name type="ORF">YCR91W</name>
</gene>
<sequence>MTQQEYRSPSQRLSKGRSMSLPKIFARNLRSLQNNAPPGKNINVNCLNVNSCSLSASPSSQINMACNGNKQDLPIPFPLHVECNDSWSSSKLNKFKSMFNHNRSKSSGTTDASTSEKGTHKREPRSTIHTELLQSSIIGEPNVHSTTSSTLIPNEAICSTPNEISGSSSPDAELFTFDMPTDPSSFHTPSSPSYIAKDSRNLSNGSLNDINENEELQNFHRKISENGSASPLANLSLSNSPIDSPRKNSETRKDQIPMNITPRLRRAASEPFNTAKDGLMREDYIALKQPPSLGDIVEPRRSRRLRTKSFGNKFQDITVEPQSFEKIRLLGQGDVGKVYLVRERDTNQIFALKVLNKHEMIKRKKIKRVLTEQEILATSDHPFIVTLYHSFQTKDYLYLCMEYCMGGEFFRALQTRKSKCIAEEDAKFYASEVVAALEYLHLLGFIYRDLKPENILLHQSGHVMLSDFDLSIQATGSKKPTMKDSTYLDTKICSDGFRTNSFVGTEEYLAPEVIRGNGHTAAVDWWTLGILIYEMLFGCTPFKGDNSNETFSNILTKDVKFPHDKEVSKNCKDLIKKLLNKNEAKRLGSKSGAADIKRHPFFKKVQWSFLRNQDPPLIPALNDNGCELPFILSCNKHPKRNSVSEQETKMFCEKVANDDEIDEADPFHDFNSMSLTKKDHNILTYSENYTYGKILYKATCTRPRHNSSHRSFFKDIIPEL</sequence>
<keyword id="KW-0067">ATP-binding</keyword>
<keyword id="KW-0418">Kinase</keyword>
<keyword id="KW-0445">Lipid transport</keyword>
<keyword id="KW-0547">Nucleotide-binding</keyword>
<keyword id="KW-0597">Phosphoprotein</keyword>
<keyword id="KW-1185">Reference proteome</keyword>
<keyword id="KW-0723">Serine/threonine-protein kinase</keyword>
<keyword id="KW-0808">Transferase</keyword>
<keyword id="KW-0813">Transport</keyword>
<dbReference type="EC" id="2.7.11.1"/>
<dbReference type="EMBL" id="X59720">
    <property type="protein sequence ID" value="CAA42256.2"/>
    <property type="molecule type" value="Genomic_DNA"/>
</dbReference>
<dbReference type="EMBL" id="BK006937">
    <property type="protein sequence ID" value="DAA07560.2"/>
    <property type="molecule type" value="Genomic_DNA"/>
</dbReference>
<dbReference type="PIR" id="S22258">
    <property type="entry name" value="S22258"/>
</dbReference>
<dbReference type="RefSeq" id="NP_010015.3">
    <property type="nucleotide sequence ID" value="NM_001178797.2"/>
</dbReference>
<dbReference type="SMR" id="P25341"/>
<dbReference type="BioGRID" id="31063">
    <property type="interactions" value="154"/>
</dbReference>
<dbReference type="DIP" id="DIP-6460N"/>
<dbReference type="FunCoup" id="P25341">
    <property type="interactions" value="352"/>
</dbReference>
<dbReference type="IntAct" id="P25341">
    <property type="interactions" value="11"/>
</dbReference>
<dbReference type="MINT" id="P25341"/>
<dbReference type="STRING" id="4932.YCR091W"/>
<dbReference type="iPTMnet" id="P25341"/>
<dbReference type="PaxDb" id="4932-YCR091W"/>
<dbReference type="PeptideAtlas" id="P25341"/>
<dbReference type="EnsemblFungi" id="YCR091W_mRNA">
    <property type="protein sequence ID" value="YCR091W"/>
    <property type="gene ID" value="YCR091W"/>
</dbReference>
<dbReference type="GeneID" id="850453"/>
<dbReference type="KEGG" id="sce:YCR091W"/>
<dbReference type="AGR" id="SGD:S000000687"/>
<dbReference type="SGD" id="S000000687">
    <property type="gene designation" value="KIN82"/>
</dbReference>
<dbReference type="VEuPathDB" id="FungiDB:YCR091W"/>
<dbReference type="eggNOG" id="KOG0610">
    <property type="taxonomic scope" value="Eukaryota"/>
</dbReference>
<dbReference type="GeneTree" id="ENSGT00940000175956"/>
<dbReference type="HOGENOM" id="CLU_000288_84_2_1"/>
<dbReference type="InParanoid" id="P25341"/>
<dbReference type="OMA" id="IPNEAIC"/>
<dbReference type="OrthoDB" id="432483at2759"/>
<dbReference type="BioCyc" id="YEAST:G3O-29385-MONOMER"/>
<dbReference type="BioGRID-ORCS" id="850453">
    <property type="hits" value="1 hit in 13 CRISPR screens"/>
</dbReference>
<dbReference type="PRO" id="PR:P25341"/>
<dbReference type="Proteomes" id="UP000002311">
    <property type="component" value="Chromosome III"/>
</dbReference>
<dbReference type="RNAct" id="P25341">
    <property type="molecule type" value="protein"/>
</dbReference>
<dbReference type="GO" id="GO:0005737">
    <property type="term" value="C:cytoplasm"/>
    <property type="evidence" value="ECO:0000318"/>
    <property type="project" value="GO_Central"/>
</dbReference>
<dbReference type="GO" id="GO:0005634">
    <property type="term" value="C:nucleus"/>
    <property type="evidence" value="ECO:0000318"/>
    <property type="project" value="GO_Central"/>
</dbReference>
<dbReference type="GO" id="GO:0005886">
    <property type="term" value="C:plasma membrane"/>
    <property type="evidence" value="ECO:0000318"/>
    <property type="project" value="GO_Central"/>
</dbReference>
<dbReference type="GO" id="GO:0005524">
    <property type="term" value="F:ATP binding"/>
    <property type="evidence" value="ECO:0007669"/>
    <property type="project" value="UniProtKB-KW"/>
</dbReference>
<dbReference type="GO" id="GO:0004672">
    <property type="term" value="F:protein kinase activity"/>
    <property type="evidence" value="ECO:0007005"/>
    <property type="project" value="SGD"/>
</dbReference>
<dbReference type="GO" id="GO:0106310">
    <property type="term" value="F:protein serine kinase activity"/>
    <property type="evidence" value="ECO:0007669"/>
    <property type="project" value="RHEA"/>
</dbReference>
<dbReference type="GO" id="GO:0004674">
    <property type="term" value="F:protein serine/threonine kinase activity"/>
    <property type="evidence" value="ECO:0000318"/>
    <property type="project" value="GO_Central"/>
</dbReference>
<dbReference type="GO" id="GO:0045332">
    <property type="term" value="P:phospholipid translocation"/>
    <property type="evidence" value="ECO:0000316"/>
    <property type="project" value="SGD"/>
</dbReference>
<dbReference type="GO" id="GO:0000749">
    <property type="term" value="P:response to pheromone triggering conjugation with cellular fusion"/>
    <property type="evidence" value="ECO:0000315"/>
    <property type="project" value="SGD"/>
</dbReference>
<dbReference type="CDD" id="cd05574">
    <property type="entry name" value="STKc_phototropin_like"/>
    <property type="match status" value="1"/>
</dbReference>
<dbReference type="FunFam" id="3.30.200.20:FF:000524">
    <property type="entry name" value="Non-specific serine/threonine protein kinase"/>
    <property type="match status" value="1"/>
</dbReference>
<dbReference type="FunFam" id="1.10.510.10:FF:000121">
    <property type="entry name" value="Serine/threonine-protein kinase nrc-2"/>
    <property type="match status" value="1"/>
</dbReference>
<dbReference type="Gene3D" id="3.30.200.20">
    <property type="entry name" value="Phosphorylase Kinase, domain 1"/>
    <property type="match status" value="1"/>
</dbReference>
<dbReference type="Gene3D" id="1.10.510.10">
    <property type="entry name" value="Transferase(Phosphotransferase) domain 1"/>
    <property type="match status" value="1"/>
</dbReference>
<dbReference type="InterPro" id="IPR011009">
    <property type="entry name" value="Kinase-like_dom_sf"/>
</dbReference>
<dbReference type="InterPro" id="IPR000719">
    <property type="entry name" value="Prot_kinase_dom"/>
</dbReference>
<dbReference type="InterPro" id="IPR008271">
    <property type="entry name" value="Ser/Thr_kinase_AS"/>
</dbReference>
<dbReference type="PANTHER" id="PTHR45637">
    <property type="entry name" value="FLIPPASE KINASE 1-RELATED"/>
    <property type="match status" value="1"/>
</dbReference>
<dbReference type="Pfam" id="PF00069">
    <property type="entry name" value="Pkinase"/>
    <property type="match status" value="1"/>
</dbReference>
<dbReference type="SMART" id="SM00220">
    <property type="entry name" value="S_TKc"/>
    <property type="match status" value="1"/>
</dbReference>
<dbReference type="SUPFAM" id="SSF56112">
    <property type="entry name" value="Protein kinase-like (PK-like)"/>
    <property type="match status" value="1"/>
</dbReference>
<dbReference type="PROSITE" id="PS50011">
    <property type="entry name" value="PROTEIN_KINASE_DOM"/>
    <property type="match status" value="1"/>
</dbReference>
<dbReference type="PROSITE" id="PS00108">
    <property type="entry name" value="PROTEIN_KINASE_ST"/>
    <property type="match status" value="1"/>
</dbReference>
<evidence type="ECO:0000255" key="1">
    <source>
        <dbReference type="PROSITE-ProRule" id="PRU00159"/>
    </source>
</evidence>
<evidence type="ECO:0000255" key="2">
    <source>
        <dbReference type="PROSITE-ProRule" id="PRU10027"/>
    </source>
</evidence>
<evidence type="ECO:0000256" key="3">
    <source>
        <dbReference type="SAM" id="MobiDB-lite"/>
    </source>
</evidence>
<evidence type="ECO:0000269" key="4">
    <source>
    </source>
</evidence>
<evidence type="ECO:0000269" key="5">
    <source>
    </source>
</evidence>
<evidence type="ECO:0000305" key="6"/>
<evidence type="ECO:0007744" key="7">
    <source>
    </source>
</evidence>
<feature type="chain" id="PRO_0000086136" description="Serine/threonine-protein kinase KIN82">
    <location>
        <begin position="1"/>
        <end position="720"/>
    </location>
</feature>
<feature type="domain" description="Protein kinase" evidence="1">
    <location>
        <begin position="324"/>
        <end position="602"/>
    </location>
</feature>
<feature type="region of interest" description="Disordered" evidence="3">
    <location>
        <begin position="1"/>
        <end position="20"/>
    </location>
</feature>
<feature type="region of interest" description="Disordered" evidence="3">
    <location>
        <begin position="99"/>
        <end position="128"/>
    </location>
</feature>
<feature type="region of interest" description="Disordered" evidence="3">
    <location>
        <begin position="230"/>
        <end position="257"/>
    </location>
</feature>
<feature type="compositionally biased region" description="Polar residues" evidence="3">
    <location>
        <begin position="1"/>
        <end position="13"/>
    </location>
</feature>
<feature type="compositionally biased region" description="Polar residues" evidence="3">
    <location>
        <begin position="99"/>
        <end position="116"/>
    </location>
</feature>
<feature type="compositionally biased region" description="Low complexity" evidence="3">
    <location>
        <begin position="230"/>
        <end position="241"/>
    </location>
</feature>
<feature type="compositionally biased region" description="Basic and acidic residues" evidence="3">
    <location>
        <begin position="244"/>
        <end position="255"/>
    </location>
</feature>
<feature type="active site" description="Proton acceptor" evidence="1 2">
    <location>
        <position position="449"/>
    </location>
</feature>
<feature type="binding site" evidence="1">
    <location>
        <begin position="330"/>
        <end position="338"/>
    </location>
    <ligand>
        <name>ATP</name>
        <dbReference type="ChEBI" id="CHEBI:30616"/>
    </ligand>
</feature>
<feature type="binding site" evidence="1">
    <location>
        <position position="353"/>
    </location>
    <ligand>
        <name>ATP</name>
        <dbReference type="ChEBI" id="CHEBI:30616"/>
    </ligand>
</feature>
<feature type="modified residue" description="Phosphoserine" evidence="7">
    <location>
        <position position="203"/>
    </location>
</feature>
<feature type="sequence conflict" description="In Ref. 1; no nucleotide entry and 2; CAA42256." evidence="6" ref="1 2">
    <original>V</original>
    <variation>M</variation>
    <location>
        <position position="341"/>
    </location>
</feature>
<reference key="1">
    <citation type="journal article" date="1992" name="Yeast">
        <title>A putative serine/threonine protein kinase gene on chromosome III of Saccharomyces cerevisiae.</title>
        <authorList>
            <person name="Wilson C."/>
            <person name="Bergantino E."/>
            <person name="Lanfranchi G."/>
            <person name="Valle G."/>
            <person name="Carignani G."/>
            <person name="Frontali L."/>
        </authorList>
    </citation>
    <scope>NUCLEOTIDE SEQUENCE [GENOMIC DNA]</scope>
</reference>
<reference key="2">
    <citation type="journal article" date="1992" name="Nature">
        <title>The complete DNA sequence of yeast chromosome III.</title>
        <authorList>
            <person name="Oliver S.G."/>
            <person name="van der Aart Q.J.M."/>
            <person name="Agostoni-Carbone M.L."/>
            <person name="Aigle M."/>
            <person name="Alberghina L."/>
            <person name="Alexandraki D."/>
            <person name="Antoine G."/>
            <person name="Anwar R."/>
            <person name="Ballesta J.P.G."/>
            <person name="Benit P."/>
            <person name="Berben G."/>
            <person name="Bergantino E."/>
            <person name="Biteau N."/>
            <person name="Bolle P.-A."/>
            <person name="Bolotin-Fukuhara M."/>
            <person name="Brown A."/>
            <person name="Brown A.J.P."/>
            <person name="Buhler J.-M."/>
            <person name="Carcano C."/>
            <person name="Carignani G."/>
            <person name="Cederberg H."/>
            <person name="Chanet R."/>
            <person name="Contreras R."/>
            <person name="Crouzet M."/>
            <person name="Daignan-Fornier B."/>
            <person name="Defoor E."/>
            <person name="Delgado M.D."/>
            <person name="Demolder J."/>
            <person name="Doira C."/>
            <person name="Dubois E."/>
            <person name="Dujon B."/>
            <person name="Duesterhoeft A."/>
            <person name="Erdmann D."/>
            <person name="Esteban M."/>
            <person name="Fabre F."/>
            <person name="Fairhead C."/>
            <person name="Faye G."/>
            <person name="Feldmann H."/>
            <person name="Fiers W."/>
            <person name="Francingues-Gaillard M.-C."/>
            <person name="Franco L."/>
            <person name="Frontali L."/>
            <person name="Fukuhara H."/>
            <person name="Fuller L.J."/>
            <person name="Galland P."/>
            <person name="Gent M.E."/>
            <person name="Gigot D."/>
            <person name="Gilliquet V."/>
            <person name="Glansdorff N."/>
            <person name="Goffeau A."/>
            <person name="Grenson M."/>
            <person name="Grisanti P."/>
            <person name="Grivell L.A."/>
            <person name="de Haan M."/>
            <person name="Haasemann M."/>
            <person name="Hatat D."/>
            <person name="Hoenicka J."/>
            <person name="Hegemann J.H."/>
            <person name="Herbert C.J."/>
            <person name="Hilger F."/>
            <person name="Hohmann S."/>
            <person name="Hollenberg C.P."/>
            <person name="Huse K."/>
            <person name="Iborra F."/>
            <person name="Indge K.J."/>
            <person name="Isono K."/>
            <person name="Jacq C."/>
            <person name="Jacquet M."/>
            <person name="James C.M."/>
            <person name="Jauniaux J.-C."/>
            <person name="Jia Y."/>
            <person name="Jimenez A."/>
            <person name="Kelly A."/>
            <person name="Kleinhans U."/>
            <person name="Kreisl P."/>
            <person name="Lanfranchi G."/>
            <person name="Lewis C."/>
            <person name="van der Linden C.G."/>
            <person name="Lucchini G."/>
            <person name="Lutzenkirchen K."/>
            <person name="Maat M.J."/>
            <person name="Mallet L."/>
            <person name="Mannhaupt G."/>
            <person name="Martegani E."/>
            <person name="Mathieu A."/>
            <person name="Maurer C.T.C."/>
            <person name="McConnell D."/>
            <person name="McKee R.A."/>
            <person name="Messenguy F."/>
            <person name="Mewes H.-W."/>
            <person name="Molemans F."/>
            <person name="Montague M.A."/>
            <person name="Muzi Falconi M."/>
            <person name="Navas L."/>
            <person name="Newlon C.S."/>
            <person name="Noone D."/>
            <person name="Pallier C."/>
            <person name="Panzeri L."/>
            <person name="Pearson B.M."/>
            <person name="Perea J."/>
            <person name="Philippsen P."/>
            <person name="Pierard A."/>
            <person name="Planta R.J."/>
            <person name="Plevani P."/>
            <person name="Poetsch B."/>
            <person name="Pohl F.M."/>
            <person name="Purnelle B."/>
            <person name="Ramezani Rad M."/>
            <person name="Rasmussen S.W."/>
            <person name="Raynal A."/>
            <person name="Remacha M.A."/>
            <person name="Richterich P."/>
            <person name="Roberts A.B."/>
            <person name="Rodriguez F."/>
            <person name="Sanz E."/>
            <person name="Schaaff-Gerstenschlaeger I."/>
            <person name="Scherens B."/>
            <person name="Schweitzer B."/>
            <person name="Shu Y."/>
            <person name="Skala J."/>
            <person name="Slonimski P.P."/>
            <person name="Sor F."/>
            <person name="Soustelle C."/>
            <person name="Spiegelberg R."/>
            <person name="Stateva L.I."/>
            <person name="Steensma H.Y."/>
            <person name="Steiner S."/>
            <person name="Thierry A."/>
            <person name="Thireos G."/>
            <person name="Tzermia M."/>
            <person name="Urrestarazu L.A."/>
            <person name="Valle G."/>
            <person name="Vetter I."/>
            <person name="van Vliet-Reedijk J.C."/>
            <person name="Voet M."/>
            <person name="Volckaert G."/>
            <person name="Vreken P."/>
            <person name="Wang H."/>
            <person name="Warmington J.R."/>
            <person name="von Wettstein D."/>
            <person name="Wicksteed B.L."/>
            <person name="Wilson C."/>
            <person name="Wurst H."/>
            <person name="Xu G."/>
            <person name="Yoshikawa A."/>
            <person name="Zimmermann F.K."/>
            <person name="Sgouros J.G."/>
        </authorList>
    </citation>
    <scope>NUCLEOTIDE SEQUENCE [LARGE SCALE GENOMIC DNA]</scope>
    <source>
        <strain>ATCC 204508 / S288c</strain>
    </source>
</reference>
<reference key="3">
    <citation type="submission" date="2001-06" db="EMBL/GenBank/DDBJ databases">
        <authorList>
            <person name="Valles G."/>
            <person name="Volckaerts G."/>
        </authorList>
    </citation>
    <scope>SEQUENCE REVISION TO 341 AND C-TERMINUS</scope>
</reference>
<reference key="4">
    <citation type="journal article" date="2014" name="G3 (Bethesda)">
        <title>The reference genome sequence of Saccharomyces cerevisiae: Then and now.</title>
        <authorList>
            <person name="Engel S.R."/>
            <person name="Dietrich F.S."/>
            <person name="Fisk D.G."/>
            <person name="Binkley G."/>
            <person name="Balakrishnan R."/>
            <person name="Costanzo M.C."/>
            <person name="Dwight S.S."/>
            <person name="Hitz B.C."/>
            <person name="Karra K."/>
            <person name="Nash R.S."/>
            <person name="Weng S."/>
            <person name="Wong E.D."/>
            <person name="Lloyd P."/>
            <person name="Skrzypek M.S."/>
            <person name="Miyasato S.R."/>
            <person name="Simison M."/>
            <person name="Cherry J.M."/>
        </authorList>
    </citation>
    <scope>GENOME REANNOTATION</scope>
    <scope>SEQUENCE REVISION TO 341</scope>
    <source>
        <strain>ATCC 204508 / S288c</strain>
    </source>
</reference>
<reference key="5">
    <citation type="journal article" date="2008" name="Mol. Biol. Cell">
        <title>Protein kinases Fpk1p and Fpk2p are novel regulators of phospholipid asymmetry.</title>
        <authorList>
            <person name="Nakano K."/>
            <person name="Yamamoto T."/>
            <person name="Kishimoto T."/>
            <person name="Noji T."/>
            <person name="Tanaka K."/>
        </authorList>
    </citation>
    <scope>FUNCTION</scope>
</reference>
<reference key="6">
    <citation type="journal article" date="2009" name="Science">
        <title>Global analysis of Cdk1 substrate phosphorylation sites provides insights into evolution.</title>
        <authorList>
            <person name="Holt L.J."/>
            <person name="Tuch B.B."/>
            <person name="Villen J."/>
            <person name="Johnson A.D."/>
            <person name="Gygi S.P."/>
            <person name="Morgan D.O."/>
        </authorList>
    </citation>
    <scope>PHOSPHORYLATION [LARGE SCALE ANALYSIS] AT SER-203</scope>
    <scope>IDENTIFICATION BY MASS SPECTROMETRY [LARGE SCALE ANALYSIS]</scope>
</reference>
<reference key="7">
    <citation type="journal article" date="2020" name="J. Biol. Chem.">
        <title>Exofacial membrane composition and lipid metabolism regulates plasma membrane P4-ATPase substrate specificity.</title>
        <authorList>
            <person name="Jain B.K."/>
            <person name="Roland B.P."/>
            <person name="Graham T.R."/>
        </authorList>
    </citation>
    <scope>DISRUPTION PHENOTYPE</scope>
</reference>
<accession>P25341</accession>
<accession>D6VR91</accession>
<proteinExistence type="evidence at protein level"/>
<name>KIN82_YEAST</name>
<protein>
    <recommendedName>
        <fullName>Serine/threonine-protein kinase KIN82</fullName>
        <ecNumber>2.7.11.1</ecNumber>
    </recommendedName>
    <alternativeName>
        <fullName>Flippase kinase 2</fullName>
    </alternativeName>
</protein>
<organism>
    <name type="scientific">Saccharomyces cerevisiae (strain ATCC 204508 / S288c)</name>
    <name type="common">Baker's yeast</name>
    <dbReference type="NCBI Taxonomy" id="559292"/>
    <lineage>
        <taxon>Eukaryota</taxon>
        <taxon>Fungi</taxon>
        <taxon>Dikarya</taxon>
        <taxon>Ascomycota</taxon>
        <taxon>Saccharomycotina</taxon>
        <taxon>Saccharomycetes</taxon>
        <taxon>Saccharomycetales</taxon>
        <taxon>Saccharomycetaceae</taxon>
        <taxon>Saccharomyces</taxon>
    </lineage>
</organism>
<comment type="function">
    <text evidence="4">Flippase activator that phosphorylates DFN1 and DFN2 and which is involved in the generation of phospholipid asymmetry in membranes by the inward translocation of phospholipids.</text>
</comment>
<comment type="catalytic activity">
    <reaction>
        <text>L-seryl-[protein] + ATP = O-phospho-L-seryl-[protein] + ADP + H(+)</text>
        <dbReference type="Rhea" id="RHEA:17989"/>
        <dbReference type="Rhea" id="RHEA-COMP:9863"/>
        <dbReference type="Rhea" id="RHEA-COMP:11604"/>
        <dbReference type="ChEBI" id="CHEBI:15378"/>
        <dbReference type="ChEBI" id="CHEBI:29999"/>
        <dbReference type="ChEBI" id="CHEBI:30616"/>
        <dbReference type="ChEBI" id="CHEBI:83421"/>
        <dbReference type="ChEBI" id="CHEBI:456216"/>
        <dbReference type="EC" id="2.7.11.1"/>
    </reaction>
</comment>
<comment type="catalytic activity">
    <reaction>
        <text>L-threonyl-[protein] + ATP = O-phospho-L-threonyl-[protein] + ADP + H(+)</text>
        <dbReference type="Rhea" id="RHEA:46608"/>
        <dbReference type="Rhea" id="RHEA-COMP:11060"/>
        <dbReference type="Rhea" id="RHEA-COMP:11605"/>
        <dbReference type="ChEBI" id="CHEBI:15378"/>
        <dbReference type="ChEBI" id="CHEBI:30013"/>
        <dbReference type="ChEBI" id="CHEBI:30616"/>
        <dbReference type="ChEBI" id="CHEBI:61977"/>
        <dbReference type="ChEBI" id="CHEBI:456216"/>
        <dbReference type="EC" id="2.7.11.1"/>
    </reaction>
</comment>
<comment type="disruption phenotype">
    <text evidence="5">Simultaneous knockout of FPK1 leads to decreased phosphatidylcholine and glucosylceramide transport into the cell.</text>
</comment>
<comment type="similarity">
    <text evidence="1">Belongs to the protein kinase superfamily. Ser/Thr protein kinase family. KIN82 subfamily.</text>
</comment>